<gene>
    <name type="primary">nocM</name>
    <name type="ordered locus">Atu6025</name>
    <name type="ORF">AGR_pTi_65</name>
</gene>
<proteinExistence type="inferred from homology"/>
<protein>
    <recommendedName>
        <fullName>Nopaline transport system permease protein NocM</fullName>
    </recommendedName>
</protein>
<dbReference type="EMBL" id="M77785">
    <property type="protein sequence ID" value="AAA50513.1"/>
    <property type="molecule type" value="Genomic_DNA"/>
</dbReference>
<dbReference type="EMBL" id="AE007871">
    <property type="protein sequence ID" value="AAK90983.1"/>
    <property type="molecule type" value="Genomic_DNA"/>
</dbReference>
<dbReference type="PIR" id="AG3230">
    <property type="entry name" value="AG3230"/>
</dbReference>
<dbReference type="PIR" id="F42600">
    <property type="entry name" value="F42600"/>
</dbReference>
<dbReference type="RefSeq" id="NP_396542.1">
    <property type="nucleotide sequence ID" value="NC_003065.3"/>
</dbReference>
<dbReference type="RefSeq" id="WP_003523894.1">
    <property type="nucleotide sequence ID" value="NC_003065.3"/>
</dbReference>
<dbReference type="SMR" id="P35113"/>
<dbReference type="TCDB" id="3.A.1.3.6">
    <property type="family name" value="the atp-binding cassette (abc) superfamily"/>
</dbReference>
<dbReference type="EnsemblBacteria" id="AAK90983">
    <property type="protein sequence ID" value="AAK90983"/>
    <property type="gene ID" value="Atu6025"/>
</dbReference>
<dbReference type="GeneID" id="1137348"/>
<dbReference type="KEGG" id="atu:Atu6025"/>
<dbReference type="PATRIC" id="fig|176299.10.peg.5232"/>
<dbReference type="HOGENOM" id="CLU_019602_1_4_5"/>
<dbReference type="OrthoDB" id="4404959at2"/>
<dbReference type="PhylomeDB" id="P35113"/>
<dbReference type="BioCyc" id="AGRO:ATU6025-MONOMER"/>
<dbReference type="Proteomes" id="UP000000813">
    <property type="component" value="Plasmid Ti"/>
</dbReference>
<dbReference type="GO" id="GO:0043190">
    <property type="term" value="C:ATP-binding cassette (ABC) transporter complex"/>
    <property type="evidence" value="ECO:0007669"/>
    <property type="project" value="InterPro"/>
</dbReference>
<dbReference type="GO" id="GO:0022857">
    <property type="term" value="F:transmembrane transporter activity"/>
    <property type="evidence" value="ECO:0007669"/>
    <property type="project" value="InterPro"/>
</dbReference>
<dbReference type="GO" id="GO:0006865">
    <property type="term" value="P:amino acid transport"/>
    <property type="evidence" value="ECO:0007669"/>
    <property type="project" value="TreeGrafter"/>
</dbReference>
<dbReference type="CDD" id="cd06261">
    <property type="entry name" value="TM_PBP2"/>
    <property type="match status" value="1"/>
</dbReference>
<dbReference type="Gene3D" id="1.10.3720.10">
    <property type="entry name" value="MetI-like"/>
    <property type="match status" value="1"/>
</dbReference>
<dbReference type="InterPro" id="IPR010065">
    <property type="entry name" value="AA_ABC_transptr_permease_3TM"/>
</dbReference>
<dbReference type="InterPro" id="IPR043429">
    <property type="entry name" value="ArtM/GltK/GlnP/TcyL/YhdX-like"/>
</dbReference>
<dbReference type="InterPro" id="IPR000515">
    <property type="entry name" value="MetI-like"/>
</dbReference>
<dbReference type="InterPro" id="IPR035906">
    <property type="entry name" value="MetI-like_sf"/>
</dbReference>
<dbReference type="NCBIfam" id="TIGR01726">
    <property type="entry name" value="HEQRo_perm_3TM"/>
    <property type="match status" value="1"/>
</dbReference>
<dbReference type="PANTHER" id="PTHR30614:SF10">
    <property type="entry name" value="ARGININE ABC TRANSPORTER PERMEASE PROTEIN ARTM"/>
    <property type="match status" value="1"/>
</dbReference>
<dbReference type="PANTHER" id="PTHR30614">
    <property type="entry name" value="MEMBRANE COMPONENT OF AMINO ACID ABC TRANSPORTER"/>
    <property type="match status" value="1"/>
</dbReference>
<dbReference type="Pfam" id="PF00528">
    <property type="entry name" value="BPD_transp_1"/>
    <property type="match status" value="1"/>
</dbReference>
<dbReference type="SUPFAM" id="SSF161098">
    <property type="entry name" value="MetI-like"/>
    <property type="match status" value="1"/>
</dbReference>
<dbReference type="PROSITE" id="PS50928">
    <property type="entry name" value="ABC_TM1"/>
    <property type="match status" value="1"/>
</dbReference>
<feature type="chain" id="PRO_0000060123" description="Nopaline transport system permease protein NocM">
    <location>
        <begin position="1"/>
        <end position="241"/>
    </location>
</feature>
<feature type="transmembrane region" description="Helical" evidence="2">
    <location>
        <begin position="21"/>
        <end position="41"/>
    </location>
</feature>
<feature type="transmembrane region" description="Helical" evidence="2">
    <location>
        <begin position="52"/>
        <end position="72"/>
    </location>
</feature>
<feature type="transmembrane region" description="Helical" evidence="2">
    <location>
        <begin position="95"/>
        <end position="115"/>
    </location>
</feature>
<feature type="transmembrane region" description="Helical" evidence="2">
    <location>
        <begin position="161"/>
        <end position="181"/>
    </location>
</feature>
<feature type="transmembrane region" description="Helical" evidence="2">
    <location>
        <begin position="191"/>
        <end position="211"/>
    </location>
</feature>
<feature type="domain" description="ABC transmembrane type-1" evidence="2">
    <location>
        <begin position="17"/>
        <end position="215"/>
    </location>
</feature>
<accession>P35113</accession>
<sequence>MDIQLIIESFPKLLAAVPTTLTLAFISLLIGFVVSVPVALMRLSKNRIVSSLAYGYVYIIRSTPLLVQMFLIYYGSAQFRGVLSEVGLWSSFREPWFCAILALALNTAAYTSEIIRGGIQSVSLGQIEAARAVGMSTFLQFRRIVFPIAIRQALPAYGNEVMLIIKSTSLASTITIVEVTGLAKQIISATYSPVEVFIVAGAIYLFITFVVSRLVMLAEWWLNPHMRARVGGTAPKAAETH</sequence>
<keyword id="KW-0997">Cell inner membrane</keyword>
<keyword id="KW-1003">Cell membrane</keyword>
<keyword id="KW-0472">Membrane</keyword>
<keyword id="KW-0614">Plasmid</keyword>
<keyword id="KW-1185">Reference proteome</keyword>
<keyword id="KW-0812">Transmembrane</keyword>
<keyword id="KW-1133">Transmembrane helix</keyword>
<keyword id="KW-0813">Transport</keyword>
<geneLocation type="plasmid">
    <name>pTiC58</name>
</geneLocation>
<comment type="function">
    <text>Component of the nopaline active transport system probably consisting of four subunits: Q, M, P and T. This system is also capable of transporting octopine provided that catabolic functions are induced with nopaline.</text>
</comment>
<comment type="subcellular location">
    <subcellularLocation>
        <location evidence="1">Cell inner membrane</location>
        <topology evidence="2">Multi-pass membrane protein</topology>
    </subcellularLocation>
</comment>
<comment type="similarity">
    <text evidence="3">Belongs to the binding-protein-dependent transport system permease family. HisMQ subfamily.</text>
</comment>
<evidence type="ECO:0000250" key="1"/>
<evidence type="ECO:0000255" key="2">
    <source>
        <dbReference type="PROSITE-ProRule" id="PRU00441"/>
    </source>
</evidence>
<evidence type="ECO:0000305" key="3"/>
<organism>
    <name type="scientific">Agrobacterium fabrum (strain C58 / ATCC 33970)</name>
    <name type="common">Agrobacterium tumefaciens (strain C58)</name>
    <dbReference type="NCBI Taxonomy" id="176299"/>
    <lineage>
        <taxon>Bacteria</taxon>
        <taxon>Pseudomonadati</taxon>
        <taxon>Pseudomonadota</taxon>
        <taxon>Alphaproteobacteria</taxon>
        <taxon>Hyphomicrobiales</taxon>
        <taxon>Rhizobiaceae</taxon>
        <taxon>Rhizobium/Agrobacterium group</taxon>
        <taxon>Agrobacterium</taxon>
        <taxon>Agrobacterium tumefaciens complex</taxon>
    </lineage>
</organism>
<reference key="1">
    <citation type="journal article" date="1992" name="J. Bacteriol.">
        <title>Opine transport genes in the octopine (occ) and nopaline (noc) catabolic regions in Ti plasmids of Agrobacterium tumefaciens.</title>
        <authorList>
            <person name="Zanker H."/>
            <person name="von Lintig J."/>
            <person name="Schroeder J."/>
        </authorList>
    </citation>
    <scope>NUCLEOTIDE SEQUENCE [GENOMIC DNA]</scope>
</reference>
<reference key="2">
    <citation type="journal article" date="2001" name="Science">
        <title>The genome of the natural genetic engineer Agrobacterium tumefaciens C58.</title>
        <authorList>
            <person name="Wood D.W."/>
            <person name="Setubal J.C."/>
            <person name="Kaul R."/>
            <person name="Monks D.E."/>
            <person name="Kitajima J.P."/>
            <person name="Okura V.K."/>
            <person name="Zhou Y."/>
            <person name="Chen L."/>
            <person name="Wood G.E."/>
            <person name="Almeida N.F. Jr."/>
            <person name="Woo L."/>
            <person name="Chen Y."/>
            <person name="Paulsen I.T."/>
            <person name="Eisen J.A."/>
            <person name="Karp P.D."/>
            <person name="Bovee D. Sr."/>
            <person name="Chapman P."/>
            <person name="Clendenning J."/>
            <person name="Deatherage G."/>
            <person name="Gillet W."/>
            <person name="Grant C."/>
            <person name="Kutyavin T."/>
            <person name="Levy R."/>
            <person name="Li M.-J."/>
            <person name="McClelland E."/>
            <person name="Palmieri A."/>
            <person name="Raymond C."/>
            <person name="Rouse G."/>
            <person name="Saenphimmachak C."/>
            <person name="Wu Z."/>
            <person name="Romero P."/>
            <person name="Gordon D."/>
            <person name="Zhang S."/>
            <person name="Yoo H."/>
            <person name="Tao Y."/>
            <person name="Biddle P."/>
            <person name="Jung M."/>
            <person name="Krespan W."/>
            <person name="Perry M."/>
            <person name="Gordon-Kamm B."/>
            <person name="Liao L."/>
            <person name="Kim S."/>
            <person name="Hendrick C."/>
            <person name="Zhao Z.-Y."/>
            <person name="Dolan M."/>
            <person name="Chumley F."/>
            <person name="Tingey S.V."/>
            <person name="Tomb J.-F."/>
            <person name="Gordon M.P."/>
            <person name="Olson M.V."/>
            <person name="Nester E.W."/>
        </authorList>
    </citation>
    <scope>NUCLEOTIDE SEQUENCE [LARGE SCALE GENOMIC DNA]</scope>
</reference>
<reference key="3">
    <citation type="journal article" date="2001" name="Science">
        <title>Genome sequence of the plant pathogen and biotechnology agent Agrobacterium tumefaciens C58.</title>
        <authorList>
            <person name="Goodner B."/>
            <person name="Hinkle G."/>
            <person name="Gattung S."/>
            <person name="Miller N."/>
            <person name="Blanchard M."/>
            <person name="Qurollo B."/>
            <person name="Goldman B.S."/>
            <person name="Cao Y."/>
            <person name="Askenazi M."/>
            <person name="Halling C."/>
            <person name="Mullin L."/>
            <person name="Houmiel K."/>
            <person name="Gordon J."/>
            <person name="Vaudin M."/>
            <person name="Iartchouk O."/>
            <person name="Epp A."/>
            <person name="Liu F."/>
            <person name="Wollam C."/>
            <person name="Allinger M."/>
            <person name="Doughty D."/>
            <person name="Scott C."/>
            <person name="Lappas C."/>
            <person name="Markelz B."/>
            <person name="Flanagan C."/>
            <person name="Crowell C."/>
            <person name="Gurson J."/>
            <person name="Lomo C."/>
            <person name="Sear C."/>
            <person name="Strub G."/>
            <person name="Cielo C."/>
            <person name="Slater S."/>
        </authorList>
    </citation>
    <scope>NUCLEOTIDE SEQUENCE [LARGE SCALE GENOMIC DNA]</scope>
    <source>
        <strain>C58 / ATCC 33970</strain>
    </source>
</reference>
<name>NOCM_AGRFC</name>